<dbReference type="EC" id="1.1.1.94" evidence="1"/>
<dbReference type="EMBL" id="CP000159">
    <property type="protein sequence ID" value="ABC43573.1"/>
    <property type="molecule type" value="Genomic_DNA"/>
</dbReference>
<dbReference type="RefSeq" id="WP_011404223.1">
    <property type="nucleotide sequence ID" value="NC_007677.1"/>
</dbReference>
<dbReference type="RefSeq" id="YP_445597.1">
    <property type="nucleotide sequence ID" value="NC_007677.1"/>
</dbReference>
<dbReference type="SMR" id="Q2S2I4"/>
<dbReference type="STRING" id="309807.SRU_1473"/>
<dbReference type="EnsemblBacteria" id="ABC43573">
    <property type="protein sequence ID" value="ABC43573"/>
    <property type="gene ID" value="SRU_1473"/>
</dbReference>
<dbReference type="KEGG" id="sru:SRU_1473"/>
<dbReference type="PATRIC" id="fig|309807.25.peg.1530"/>
<dbReference type="eggNOG" id="COG0240">
    <property type="taxonomic scope" value="Bacteria"/>
</dbReference>
<dbReference type="HOGENOM" id="CLU_033449_0_2_10"/>
<dbReference type="OrthoDB" id="9812273at2"/>
<dbReference type="UniPathway" id="UPA00940"/>
<dbReference type="Proteomes" id="UP000008674">
    <property type="component" value="Chromosome"/>
</dbReference>
<dbReference type="GO" id="GO:0005829">
    <property type="term" value="C:cytosol"/>
    <property type="evidence" value="ECO:0007669"/>
    <property type="project" value="TreeGrafter"/>
</dbReference>
<dbReference type="GO" id="GO:0047952">
    <property type="term" value="F:glycerol-3-phosphate dehydrogenase [NAD(P)+] activity"/>
    <property type="evidence" value="ECO:0007669"/>
    <property type="project" value="UniProtKB-UniRule"/>
</dbReference>
<dbReference type="GO" id="GO:0051287">
    <property type="term" value="F:NAD binding"/>
    <property type="evidence" value="ECO:0007669"/>
    <property type="project" value="InterPro"/>
</dbReference>
<dbReference type="GO" id="GO:0005975">
    <property type="term" value="P:carbohydrate metabolic process"/>
    <property type="evidence" value="ECO:0007669"/>
    <property type="project" value="InterPro"/>
</dbReference>
<dbReference type="GO" id="GO:0046167">
    <property type="term" value="P:glycerol-3-phosphate biosynthetic process"/>
    <property type="evidence" value="ECO:0007669"/>
    <property type="project" value="UniProtKB-UniRule"/>
</dbReference>
<dbReference type="GO" id="GO:0046168">
    <property type="term" value="P:glycerol-3-phosphate catabolic process"/>
    <property type="evidence" value="ECO:0007669"/>
    <property type="project" value="InterPro"/>
</dbReference>
<dbReference type="GO" id="GO:0006650">
    <property type="term" value="P:glycerophospholipid metabolic process"/>
    <property type="evidence" value="ECO:0007669"/>
    <property type="project" value="UniProtKB-UniRule"/>
</dbReference>
<dbReference type="GO" id="GO:0008654">
    <property type="term" value="P:phospholipid biosynthetic process"/>
    <property type="evidence" value="ECO:0007669"/>
    <property type="project" value="UniProtKB-KW"/>
</dbReference>
<dbReference type="FunFam" id="1.10.1040.10:FF:000001">
    <property type="entry name" value="Glycerol-3-phosphate dehydrogenase [NAD(P)+]"/>
    <property type="match status" value="1"/>
</dbReference>
<dbReference type="FunFam" id="3.40.50.720:FF:000019">
    <property type="entry name" value="Glycerol-3-phosphate dehydrogenase [NAD(P)+]"/>
    <property type="match status" value="1"/>
</dbReference>
<dbReference type="Gene3D" id="1.10.1040.10">
    <property type="entry name" value="N-(1-d-carboxylethyl)-l-norvaline Dehydrogenase, domain 2"/>
    <property type="match status" value="1"/>
</dbReference>
<dbReference type="Gene3D" id="3.40.50.720">
    <property type="entry name" value="NAD(P)-binding Rossmann-like Domain"/>
    <property type="match status" value="1"/>
</dbReference>
<dbReference type="HAMAP" id="MF_00394">
    <property type="entry name" value="NAD_Glyc3P_dehydrog"/>
    <property type="match status" value="1"/>
</dbReference>
<dbReference type="InterPro" id="IPR008927">
    <property type="entry name" value="6-PGluconate_DH-like_C_sf"/>
</dbReference>
<dbReference type="InterPro" id="IPR013328">
    <property type="entry name" value="6PGD_dom2"/>
</dbReference>
<dbReference type="InterPro" id="IPR006168">
    <property type="entry name" value="G3P_DH_NAD-dep"/>
</dbReference>
<dbReference type="InterPro" id="IPR006109">
    <property type="entry name" value="G3P_DH_NAD-dep_C"/>
</dbReference>
<dbReference type="InterPro" id="IPR011128">
    <property type="entry name" value="G3P_DH_NAD-dep_N"/>
</dbReference>
<dbReference type="InterPro" id="IPR036291">
    <property type="entry name" value="NAD(P)-bd_dom_sf"/>
</dbReference>
<dbReference type="NCBIfam" id="NF000940">
    <property type="entry name" value="PRK00094.1-2"/>
    <property type="match status" value="1"/>
</dbReference>
<dbReference type="NCBIfam" id="NF000942">
    <property type="entry name" value="PRK00094.1-4"/>
    <property type="match status" value="1"/>
</dbReference>
<dbReference type="PANTHER" id="PTHR11728">
    <property type="entry name" value="GLYCEROL-3-PHOSPHATE DEHYDROGENASE"/>
    <property type="match status" value="1"/>
</dbReference>
<dbReference type="PANTHER" id="PTHR11728:SF1">
    <property type="entry name" value="GLYCEROL-3-PHOSPHATE DEHYDROGENASE [NAD(+)] 2, CHLOROPLASTIC"/>
    <property type="match status" value="1"/>
</dbReference>
<dbReference type="Pfam" id="PF07479">
    <property type="entry name" value="NAD_Gly3P_dh_C"/>
    <property type="match status" value="1"/>
</dbReference>
<dbReference type="Pfam" id="PF01210">
    <property type="entry name" value="NAD_Gly3P_dh_N"/>
    <property type="match status" value="1"/>
</dbReference>
<dbReference type="PIRSF" id="PIRSF000114">
    <property type="entry name" value="Glycerol-3-P_dh"/>
    <property type="match status" value="1"/>
</dbReference>
<dbReference type="PRINTS" id="PR00077">
    <property type="entry name" value="GPDHDRGNASE"/>
</dbReference>
<dbReference type="SUPFAM" id="SSF48179">
    <property type="entry name" value="6-phosphogluconate dehydrogenase C-terminal domain-like"/>
    <property type="match status" value="1"/>
</dbReference>
<dbReference type="SUPFAM" id="SSF51735">
    <property type="entry name" value="NAD(P)-binding Rossmann-fold domains"/>
    <property type="match status" value="1"/>
</dbReference>
<dbReference type="PROSITE" id="PS00957">
    <property type="entry name" value="NAD_G3PDH"/>
    <property type="match status" value="1"/>
</dbReference>
<sequence length="341" mass="36804">MSSITLFGAGSWGTAMSVHLASAGRDVVLWARRPEVADEIRRTSHNPTYLPELLIPSSVYITTDLEKAAEASDLWGMAVPSQQLRGRAEHLRPHAHSGVRLVALSKGIENETLLTMSQVLDDVFESVPSDQIGALYGPSHAEEVAEGRPTAVVAAAPDEGEARHIQKVFMTERLRVYMNTDVLGVEIGGSAKNVLAIAAGIADGVSYGDNAKAALVTRGLAEIRRLGQALGADPQTFAGLAGIGDLVVTCMSPHSRNRYLGEQISTGKSLDEVLNDMAMVAEGVRTTRSVYNLAKHHGVEMPITEAVHAILFDDKSPRKMVKRLMTRSAKHENWLPTTLQQ</sequence>
<feature type="chain" id="PRO_0000255364" description="Glycerol-3-phosphate dehydrogenase [NAD(P)+] 1">
    <location>
        <begin position="1"/>
        <end position="341"/>
    </location>
</feature>
<feature type="active site" description="Proton acceptor" evidence="1">
    <location>
        <position position="192"/>
    </location>
</feature>
<feature type="binding site" evidence="1">
    <location>
        <position position="11"/>
    </location>
    <ligand>
        <name>NADPH</name>
        <dbReference type="ChEBI" id="CHEBI:57783"/>
    </ligand>
</feature>
<feature type="binding site" evidence="1">
    <location>
        <position position="12"/>
    </location>
    <ligand>
        <name>NADPH</name>
        <dbReference type="ChEBI" id="CHEBI:57783"/>
    </ligand>
</feature>
<feature type="binding site" evidence="1">
    <location>
        <position position="32"/>
    </location>
    <ligand>
        <name>NADPH</name>
        <dbReference type="ChEBI" id="CHEBI:57783"/>
    </ligand>
</feature>
<feature type="binding site" evidence="1">
    <location>
        <position position="33"/>
    </location>
    <ligand>
        <name>NADPH</name>
        <dbReference type="ChEBI" id="CHEBI:57783"/>
    </ligand>
</feature>
<feature type="binding site" evidence="1">
    <location>
        <position position="106"/>
    </location>
    <ligand>
        <name>NADPH</name>
        <dbReference type="ChEBI" id="CHEBI:57783"/>
    </ligand>
</feature>
<feature type="binding site" evidence="1">
    <location>
        <position position="106"/>
    </location>
    <ligand>
        <name>sn-glycerol 3-phosphate</name>
        <dbReference type="ChEBI" id="CHEBI:57597"/>
    </ligand>
</feature>
<feature type="binding site" evidence="1">
    <location>
        <position position="137"/>
    </location>
    <ligand>
        <name>sn-glycerol 3-phosphate</name>
        <dbReference type="ChEBI" id="CHEBI:57597"/>
    </ligand>
</feature>
<feature type="binding site" evidence="1">
    <location>
        <position position="139"/>
    </location>
    <ligand>
        <name>sn-glycerol 3-phosphate</name>
        <dbReference type="ChEBI" id="CHEBI:57597"/>
    </ligand>
</feature>
<feature type="binding site" evidence="1">
    <location>
        <position position="141"/>
    </location>
    <ligand>
        <name>NADPH</name>
        <dbReference type="ChEBI" id="CHEBI:57783"/>
    </ligand>
</feature>
<feature type="binding site" evidence="1">
    <location>
        <position position="192"/>
    </location>
    <ligand>
        <name>sn-glycerol 3-phosphate</name>
        <dbReference type="ChEBI" id="CHEBI:57597"/>
    </ligand>
</feature>
<feature type="binding site" evidence="1">
    <location>
        <position position="245"/>
    </location>
    <ligand>
        <name>sn-glycerol 3-phosphate</name>
        <dbReference type="ChEBI" id="CHEBI:57597"/>
    </ligand>
</feature>
<feature type="binding site" evidence="1">
    <location>
        <position position="255"/>
    </location>
    <ligand>
        <name>sn-glycerol 3-phosphate</name>
        <dbReference type="ChEBI" id="CHEBI:57597"/>
    </ligand>
</feature>
<feature type="binding site" evidence="1">
    <location>
        <position position="256"/>
    </location>
    <ligand>
        <name>NADPH</name>
        <dbReference type="ChEBI" id="CHEBI:57783"/>
    </ligand>
</feature>
<feature type="binding site" evidence="1">
    <location>
        <position position="256"/>
    </location>
    <ligand>
        <name>sn-glycerol 3-phosphate</name>
        <dbReference type="ChEBI" id="CHEBI:57597"/>
    </ligand>
</feature>
<feature type="binding site" evidence="1">
    <location>
        <position position="257"/>
    </location>
    <ligand>
        <name>sn-glycerol 3-phosphate</name>
        <dbReference type="ChEBI" id="CHEBI:57597"/>
    </ligand>
</feature>
<feature type="binding site" evidence="1">
    <location>
        <position position="280"/>
    </location>
    <ligand>
        <name>NADPH</name>
        <dbReference type="ChEBI" id="CHEBI:57783"/>
    </ligand>
</feature>
<feature type="binding site" evidence="1">
    <location>
        <position position="282"/>
    </location>
    <ligand>
        <name>NADPH</name>
        <dbReference type="ChEBI" id="CHEBI:57783"/>
    </ligand>
</feature>
<reference key="1">
    <citation type="journal article" date="2005" name="Proc. Natl. Acad. Sci. U.S.A.">
        <title>The genome of Salinibacter ruber: convergence and gene exchange among hyperhalophilic bacteria and archaea.</title>
        <authorList>
            <person name="Mongodin E.F."/>
            <person name="Nelson K.E."/>
            <person name="Daugherty S."/>
            <person name="DeBoy R.T."/>
            <person name="Wister J."/>
            <person name="Khouri H."/>
            <person name="Weidman J."/>
            <person name="Walsh D.A."/>
            <person name="Papke R.T."/>
            <person name="Sanchez Perez G."/>
            <person name="Sharma A.K."/>
            <person name="Nesbo C.L."/>
            <person name="MacLeod D."/>
            <person name="Bapteste E."/>
            <person name="Doolittle W.F."/>
            <person name="Charlebois R.L."/>
            <person name="Legault B."/>
            <person name="Rodriguez-Valera F."/>
        </authorList>
    </citation>
    <scope>NUCLEOTIDE SEQUENCE [LARGE SCALE GENOMIC DNA]</scope>
    <source>
        <strain>DSM 13855 / CECT 5946 / M31</strain>
    </source>
</reference>
<accession>Q2S2I4</accession>
<comment type="function">
    <text evidence="1">Catalyzes the reduction of the glycolytic intermediate dihydroxyacetone phosphate (DHAP) to sn-glycerol 3-phosphate (G3P), the key precursor for phospholipid synthesis.</text>
</comment>
<comment type="catalytic activity">
    <reaction evidence="1">
        <text>sn-glycerol 3-phosphate + NAD(+) = dihydroxyacetone phosphate + NADH + H(+)</text>
        <dbReference type="Rhea" id="RHEA:11092"/>
        <dbReference type="ChEBI" id="CHEBI:15378"/>
        <dbReference type="ChEBI" id="CHEBI:57540"/>
        <dbReference type="ChEBI" id="CHEBI:57597"/>
        <dbReference type="ChEBI" id="CHEBI:57642"/>
        <dbReference type="ChEBI" id="CHEBI:57945"/>
        <dbReference type="EC" id="1.1.1.94"/>
    </reaction>
    <physiologicalReaction direction="right-to-left" evidence="1">
        <dbReference type="Rhea" id="RHEA:11094"/>
    </physiologicalReaction>
</comment>
<comment type="catalytic activity">
    <reaction evidence="1">
        <text>sn-glycerol 3-phosphate + NADP(+) = dihydroxyacetone phosphate + NADPH + H(+)</text>
        <dbReference type="Rhea" id="RHEA:11096"/>
        <dbReference type="ChEBI" id="CHEBI:15378"/>
        <dbReference type="ChEBI" id="CHEBI:57597"/>
        <dbReference type="ChEBI" id="CHEBI:57642"/>
        <dbReference type="ChEBI" id="CHEBI:57783"/>
        <dbReference type="ChEBI" id="CHEBI:58349"/>
        <dbReference type="EC" id="1.1.1.94"/>
    </reaction>
    <physiologicalReaction direction="right-to-left" evidence="1">
        <dbReference type="Rhea" id="RHEA:11098"/>
    </physiologicalReaction>
</comment>
<comment type="pathway">
    <text evidence="1">Membrane lipid metabolism; glycerophospholipid metabolism.</text>
</comment>
<comment type="subcellular location">
    <subcellularLocation>
        <location evidence="1">Cytoplasm</location>
    </subcellularLocation>
</comment>
<comment type="similarity">
    <text evidence="1">Belongs to the NAD-dependent glycerol-3-phosphate dehydrogenase family.</text>
</comment>
<organism>
    <name type="scientific">Salinibacter ruber (strain DSM 13855 / M31)</name>
    <dbReference type="NCBI Taxonomy" id="309807"/>
    <lineage>
        <taxon>Bacteria</taxon>
        <taxon>Pseudomonadati</taxon>
        <taxon>Rhodothermota</taxon>
        <taxon>Rhodothermia</taxon>
        <taxon>Rhodothermales</taxon>
        <taxon>Salinibacteraceae</taxon>
        <taxon>Salinibacter</taxon>
    </lineage>
</organism>
<proteinExistence type="inferred from homology"/>
<keyword id="KW-0963">Cytoplasm</keyword>
<keyword id="KW-0444">Lipid biosynthesis</keyword>
<keyword id="KW-0443">Lipid metabolism</keyword>
<keyword id="KW-0520">NAD</keyword>
<keyword id="KW-0521">NADP</keyword>
<keyword id="KW-0547">Nucleotide-binding</keyword>
<keyword id="KW-0560">Oxidoreductase</keyword>
<keyword id="KW-0594">Phospholipid biosynthesis</keyword>
<keyword id="KW-1208">Phospholipid metabolism</keyword>
<keyword id="KW-1185">Reference proteome</keyword>
<protein>
    <recommendedName>
        <fullName evidence="1">Glycerol-3-phosphate dehydrogenase [NAD(P)+] 1</fullName>
        <ecNumber evidence="1">1.1.1.94</ecNumber>
    </recommendedName>
    <alternativeName>
        <fullName evidence="1">NAD(P)(+)-dependent glycerol-3-phosphate dehydrogenase 1</fullName>
    </alternativeName>
    <alternativeName>
        <fullName evidence="1">NAD(P)H-dependent dihydroxyacetone-phosphate reductase 1</fullName>
    </alternativeName>
</protein>
<evidence type="ECO:0000255" key="1">
    <source>
        <dbReference type="HAMAP-Rule" id="MF_00394"/>
    </source>
</evidence>
<gene>
    <name evidence="1" type="primary">gpsA1</name>
    <name type="ordered locus">SRU_1473</name>
</gene>
<name>GPDA1_SALRD</name>